<keyword id="KW-0067">ATP-binding</keyword>
<keyword id="KW-0133">Cell shape</keyword>
<keyword id="KW-0961">Cell wall biogenesis/degradation</keyword>
<keyword id="KW-0963">Cytoplasm</keyword>
<keyword id="KW-0436">Ligase</keyword>
<keyword id="KW-0460">Magnesium</keyword>
<keyword id="KW-0464">Manganese</keyword>
<keyword id="KW-0479">Metal-binding</keyword>
<keyword id="KW-0547">Nucleotide-binding</keyword>
<keyword id="KW-0573">Peptidoglycan synthesis</keyword>
<keyword id="KW-1185">Reference proteome</keyword>
<gene>
    <name evidence="2" type="primary">ddl</name>
    <name type="ordered locus">Glov_0667</name>
</gene>
<dbReference type="EC" id="6.3.2.4" evidence="2"/>
<dbReference type="EMBL" id="CP001089">
    <property type="protein sequence ID" value="ACD94393.1"/>
    <property type="molecule type" value="Genomic_DNA"/>
</dbReference>
<dbReference type="RefSeq" id="WP_012468749.1">
    <property type="nucleotide sequence ID" value="NC_010814.1"/>
</dbReference>
<dbReference type="SMR" id="B3E3X9"/>
<dbReference type="STRING" id="398767.Glov_0667"/>
<dbReference type="KEGG" id="glo:Glov_0667"/>
<dbReference type="eggNOG" id="COG1181">
    <property type="taxonomic scope" value="Bacteria"/>
</dbReference>
<dbReference type="HOGENOM" id="CLU_039268_2_0_7"/>
<dbReference type="OrthoDB" id="9813261at2"/>
<dbReference type="UniPathway" id="UPA00219"/>
<dbReference type="Proteomes" id="UP000002420">
    <property type="component" value="Chromosome"/>
</dbReference>
<dbReference type="GO" id="GO:0005737">
    <property type="term" value="C:cytoplasm"/>
    <property type="evidence" value="ECO:0007669"/>
    <property type="project" value="UniProtKB-SubCell"/>
</dbReference>
<dbReference type="GO" id="GO:0005524">
    <property type="term" value="F:ATP binding"/>
    <property type="evidence" value="ECO:0007669"/>
    <property type="project" value="UniProtKB-KW"/>
</dbReference>
<dbReference type="GO" id="GO:0008716">
    <property type="term" value="F:D-alanine-D-alanine ligase activity"/>
    <property type="evidence" value="ECO:0007669"/>
    <property type="project" value="UniProtKB-UniRule"/>
</dbReference>
<dbReference type="GO" id="GO:0046872">
    <property type="term" value="F:metal ion binding"/>
    <property type="evidence" value="ECO:0007669"/>
    <property type="project" value="UniProtKB-KW"/>
</dbReference>
<dbReference type="GO" id="GO:0071555">
    <property type="term" value="P:cell wall organization"/>
    <property type="evidence" value="ECO:0007669"/>
    <property type="project" value="UniProtKB-KW"/>
</dbReference>
<dbReference type="GO" id="GO:0009252">
    <property type="term" value="P:peptidoglycan biosynthetic process"/>
    <property type="evidence" value="ECO:0007669"/>
    <property type="project" value="UniProtKB-UniRule"/>
</dbReference>
<dbReference type="GO" id="GO:0008360">
    <property type="term" value="P:regulation of cell shape"/>
    <property type="evidence" value="ECO:0007669"/>
    <property type="project" value="UniProtKB-KW"/>
</dbReference>
<dbReference type="Gene3D" id="3.40.50.20">
    <property type="match status" value="1"/>
</dbReference>
<dbReference type="Gene3D" id="3.30.1490.20">
    <property type="entry name" value="ATP-grasp fold, A domain"/>
    <property type="match status" value="1"/>
</dbReference>
<dbReference type="Gene3D" id="3.30.470.20">
    <property type="entry name" value="ATP-grasp fold, B domain"/>
    <property type="match status" value="1"/>
</dbReference>
<dbReference type="HAMAP" id="MF_00047">
    <property type="entry name" value="Dala_Dala_lig"/>
    <property type="match status" value="1"/>
</dbReference>
<dbReference type="InterPro" id="IPR011761">
    <property type="entry name" value="ATP-grasp"/>
</dbReference>
<dbReference type="InterPro" id="IPR013815">
    <property type="entry name" value="ATP_grasp_subdomain_1"/>
</dbReference>
<dbReference type="InterPro" id="IPR000291">
    <property type="entry name" value="D-Ala_lig_Van_CS"/>
</dbReference>
<dbReference type="InterPro" id="IPR005905">
    <property type="entry name" value="D_ala_D_ala"/>
</dbReference>
<dbReference type="InterPro" id="IPR011095">
    <property type="entry name" value="Dala_Dala_lig_C"/>
</dbReference>
<dbReference type="InterPro" id="IPR011127">
    <property type="entry name" value="Dala_Dala_lig_N"/>
</dbReference>
<dbReference type="InterPro" id="IPR016185">
    <property type="entry name" value="PreATP-grasp_dom_sf"/>
</dbReference>
<dbReference type="NCBIfam" id="TIGR01205">
    <property type="entry name" value="D_ala_D_alaTIGR"/>
    <property type="match status" value="1"/>
</dbReference>
<dbReference type="NCBIfam" id="NF002378">
    <property type="entry name" value="PRK01372.1"/>
    <property type="match status" value="1"/>
</dbReference>
<dbReference type="NCBIfam" id="NF002528">
    <property type="entry name" value="PRK01966.1-4"/>
    <property type="match status" value="1"/>
</dbReference>
<dbReference type="PANTHER" id="PTHR23132">
    <property type="entry name" value="D-ALANINE--D-ALANINE LIGASE"/>
    <property type="match status" value="1"/>
</dbReference>
<dbReference type="PANTHER" id="PTHR23132:SF23">
    <property type="entry name" value="D-ALANINE--D-ALANINE LIGASE B"/>
    <property type="match status" value="1"/>
</dbReference>
<dbReference type="Pfam" id="PF07478">
    <property type="entry name" value="Dala_Dala_lig_C"/>
    <property type="match status" value="1"/>
</dbReference>
<dbReference type="Pfam" id="PF01820">
    <property type="entry name" value="Dala_Dala_lig_N"/>
    <property type="match status" value="1"/>
</dbReference>
<dbReference type="PIRSF" id="PIRSF039102">
    <property type="entry name" value="Ddl/VanB"/>
    <property type="match status" value="1"/>
</dbReference>
<dbReference type="SUPFAM" id="SSF56059">
    <property type="entry name" value="Glutathione synthetase ATP-binding domain-like"/>
    <property type="match status" value="1"/>
</dbReference>
<dbReference type="SUPFAM" id="SSF52440">
    <property type="entry name" value="PreATP-grasp domain"/>
    <property type="match status" value="1"/>
</dbReference>
<dbReference type="PROSITE" id="PS50975">
    <property type="entry name" value="ATP_GRASP"/>
    <property type="match status" value="1"/>
</dbReference>
<dbReference type="PROSITE" id="PS00843">
    <property type="entry name" value="DALA_DALA_LIGASE_1"/>
    <property type="match status" value="1"/>
</dbReference>
<dbReference type="PROSITE" id="PS00844">
    <property type="entry name" value="DALA_DALA_LIGASE_2"/>
    <property type="match status" value="1"/>
</dbReference>
<proteinExistence type="inferred from homology"/>
<sequence>MTRDELKQKRIGVLMGGLSAERDVSLKSGMAVHQALLAMGYDSTALDVRHNVALILREEKIDLAFIALHGRYGEDGCIQGLLELMQIPYTGSGVLASALAMHKLYSKQAFAAAGLTITPYATVRQGDRCNAEQLPFGLPVVVKPVQEGSSVGVTIVKKPEDLQAALDEAFRYDTLVLVEKYIKGQEVQVGILANQPIGAIEIVPKNEFYDFEAKYSDGMAEHIFPARLAEPLYQKVQQQGLQAHQALGCDGYCRVDFLVTENGDCYLLEVNTLPGMTALSLLPEIAQKGAGLSFEALVEQIACSAALKTGQAG</sequence>
<evidence type="ECO:0000250" key="1"/>
<evidence type="ECO:0000255" key="2">
    <source>
        <dbReference type="HAMAP-Rule" id="MF_00047"/>
    </source>
</evidence>
<name>DDL_TRIL1</name>
<comment type="function">
    <text evidence="2">Cell wall formation.</text>
</comment>
<comment type="catalytic activity">
    <reaction evidence="2">
        <text>2 D-alanine + ATP = D-alanyl-D-alanine + ADP + phosphate + H(+)</text>
        <dbReference type="Rhea" id="RHEA:11224"/>
        <dbReference type="ChEBI" id="CHEBI:15378"/>
        <dbReference type="ChEBI" id="CHEBI:30616"/>
        <dbReference type="ChEBI" id="CHEBI:43474"/>
        <dbReference type="ChEBI" id="CHEBI:57416"/>
        <dbReference type="ChEBI" id="CHEBI:57822"/>
        <dbReference type="ChEBI" id="CHEBI:456216"/>
        <dbReference type="EC" id="6.3.2.4"/>
    </reaction>
</comment>
<comment type="cofactor">
    <cofactor evidence="1">
        <name>Mg(2+)</name>
        <dbReference type="ChEBI" id="CHEBI:18420"/>
    </cofactor>
    <cofactor evidence="1">
        <name>Mn(2+)</name>
        <dbReference type="ChEBI" id="CHEBI:29035"/>
    </cofactor>
    <text evidence="1">Binds 2 magnesium or manganese ions per subunit.</text>
</comment>
<comment type="pathway">
    <text evidence="2">Cell wall biogenesis; peptidoglycan biosynthesis.</text>
</comment>
<comment type="subcellular location">
    <subcellularLocation>
        <location evidence="2">Cytoplasm</location>
    </subcellularLocation>
</comment>
<comment type="similarity">
    <text evidence="2">Belongs to the D-alanine--D-alanine ligase family.</text>
</comment>
<feature type="chain" id="PRO_1000091184" description="D-alanine--D-alanine ligase">
    <location>
        <begin position="1"/>
        <end position="313"/>
    </location>
</feature>
<feature type="domain" description="ATP-grasp" evidence="2">
    <location>
        <begin position="107"/>
        <end position="303"/>
    </location>
</feature>
<feature type="binding site" evidence="2">
    <location>
        <begin position="135"/>
        <end position="188"/>
    </location>
    <ligand>
        <name>ATP</name>
        <dbReference type="ChEBI" id="CHEBI:30616"/>
    </ligand>
</feature>
<feature type="binding site" evidence="2">
    <location>
        <position position="256"/>
    </location>
    <ligand>
        <name>Mg(2+)</name>
        <dbReference type="ChEBI" id="CHEBI:18420"/>
        <label>1</label>
    </ligand>
</feature>
<feature type="binding site" evidence="2">
    <location>
        <position position="269"/>
    </location>
    <ligand>
        <name>Mg(2+)</name>
        <dbReference type="ChEBI" id="CHEBI:18420"/>
        <label>1</label>
    </ligand>
</feature>
<feature type="binding site" evidence="2">
    <location>
        <position position="269"/>
    </location>
    <ligand>
        <name>Mg(2+)</name>
        <dbReference type="ChEBI" id="CHEBI:18420"/>
        <label>2</label>
    </ligand>
</feature>
<feature type="binding site" evidence="2">
    <location>
        <position position="271"/>
    </location>
    <ligand>
        <name>Mg(2+)</name>
        <dbReference type="ChEBI" id="CHEBI:18420"/>
        <label>2</label>
    </ligand>
</feature>
<protein>
    <recommendedName>
        <fullName evidence="2">D-alanine--D-alanine ligase</fullName>
        <ecNumber evidence="2">6.3.2.4</ecNumber>
    </recommendedName>
    <alternativeName>
        <fullName evidence="2">D-Ala-D-Ala ligase</fullName>
    </alternativeName>
    <alternativeName>
        <fullName evidence="2">D-alanylalanine synthetase</fullName>
    </alternativeName>
</protein>
<reference key="1">
    <citation type="submission" date="2008-05" db="EMBL/GenBank/DDBJ databases">
        <title>Complete sequence of chromosome of Geobacter lovleyi SZ.</title>
        <authorList>
            <consortium name="US DOE Joint Genome Institute"/>
            <person name="Lucas S."/>
            <person name="Copeland A."/>
            <person name="Lapidus A."/>
            <person name="Glavina del Rio T."/>
            <person name="Dalin E."/>
            <person name="Tice H."/>
            <person name="Bruce D."/>
            <person name="Goodwin L."/>
            <person name="Pitluck S."/>
            <person name="Chertkov O."/>
            <person name="Meincke L."/>
            <person name="Brettin T."/>
            <person name="Detter J.C."/>
            <person name="Han C."/>
            <person name="Tapia R."/>
            <person name="Kuske C.R."/>
            <person name="Schmutz J."/>
            <person name="Larimer F."/>
            <person name="Land M."/>
            <person name="Hauser L."/>
            <person name="Kyrpides N."/>
            <person name="Mikhailova N."/>
            <person name="Sung Y."/>
            <person name="Fletcher K.E."/>
            <person name="Ritalahti K.M."/>
            <person name="Loeffler F.E."/>
            <person name="Richardson P."/>
        </authorList>
    </citation>
    <scope>NUCLEOTIDE SEQUENCE [LARGE SCALE GENOMIC DNA]</scope>
    <source>
        <strain>ATCC BAA-1151 / DSM 17278 / SZ</strain>
    </source>
</reference>
<accession>B3E3X9</accession>
<organism>
    <name type="scientific">Trichlorobacter lovleyi (strain ATCC BAA-1151 / DSM 17278 / SZ)</name>
    <name type="common">Geobacter lovleyi</name>
    <dbReference type="NCBI Taxonomy" id="398767"/>
    <lineage>
        <taxon>Bacteria</taxon>
        <taxon>Pseudomonadati</taxon>
        <taxon>Thermodesulfobacteriota</taxon>
        <taxon>Desulfuromonadia</taxon>
        <taxon>Geobacterales</taxon>
        <taxon>Geobacteraceae</taxon>
        <taxon>Trichlorobacter</taxon>
    </lineage>
</organism>